<reference key="1">
    <citation type="journal article" date="2009" name="Infect. Immun.">
        <title>Comparative genomics reveal extensive transposon-mediated genomic plasticity and diversity among potential effector proteins within the genus Coxiella.</title>
        <authorList>
            <person name="Beare P.A."/>
            <person name="Unsworth N."/>
            <person name="Andoh M."/>
            <person name="Voth D.E."/>
            <person name="Omsland A."/>
            <person name="Gilk S.D."/>
            <person name="Williams K.P."/>
            <person name="Sobral B.W."/>
            <person name="Kupko J.J. III"/>
            <person name="Porcella S.F."/>
            <person name="Samuel J.E."/>
            <person name="Heinzen R.A."/>
        </authorList>
    </citation>
    <scope>NUCLEOTIDE SEQUENCE [LARGE SCALE GENOMIC DNA]</scope>
    <source>
        <strain>CbuG_Q212</strain>
    </source>
</reference>
<sequence>MLYYPHIDPVAFRLGPLKVHWYGLMYLVGFAMAWGLALYRARDPKRHWTAQQVGDLIFYGALGLIIGGRLGYMLFYDFSNFIANPLTLFQVWRGGMSFHGGLIGVIVTTWIFSRRTHKRWMDVTDFVVPLVPLGLAAGRIGNFINGELWGRVTTVPWGMVFPNAGPLPRHPSQLYEFLLEGVLLFIVIWWFSAKLRPRFAVSSLFLLCYGLFRFTAEFFRQPDPQLGFVAFGWLTRGQELSLPMIIIGGFALWWAYRHKER</sequence>
<feature type="chain" id="PRO_1000137417" description="Phosphatidylglycerol--prolipoprotein diacylglyceryl transferase">
    <location>
        <begin position="1"/>
        <end position="261"/>
    </location>
</feature>
<feature type="transmembrane region" description="Helical" evidence="1">
    <location>
        <begin position="19"/>
        <end position="39"/>
    </location>
</feature>
<feature type="transmembrane region" description="Helical" evidence="1">
    <location>
        <begin position="56"/>
        <end position="76"/>
    </location>
</feature>
<feature type="transmembrane region" description="Helical" evidence="1">
    <location>
        <begin position="92"/>
        <end position="112"/>
    </location>
</feature>
<feature type="transmembrane region" description="Helical" evidence="1">
    <location>
        <begin position="126"/>
        <end position="146"/>
    </location>
</feature>
<feature type="transmembrane region" description="Helical" evidence="1">
    <location>
        <begin position="173"/>
        <end position="193"/>
    </location>
</feature>
<feature type="transmembrane region" description="Helical" evidence="1">
    <location>
        <begin position="199"/>
        <end position="219"/>
    </location>
</feature>
<feature type="transmembrane region" description="Helical" evidence="1">
    <location>
        <begin position="227"/>
        <end position="247"/>
    </location>
</feature>
<feature type="binding site" evidence="1">
    <location>
        <position position="139"/>
    </location>
    <ligand>
        <name>a 1,2-diacyl-sn-glycero-3-phospho-(1'-sn-glycerol)</name>
        <dbReference type="ChEBI" id="CHEBI:64716"/>
    </ligand>
</feature>
<evidence type="ECO:0000255" key="1">
    <source>
        <dbReference type="HAMAP-Rule" id="MF_01147"/>
    </source>
</evidence>
<accession>B6IYW0</accession>
<proteinExistence type="inferred from homology"/>
<dbReference type="EC" id="2.5.1.145" evidence="1"/>
<dbReference type="EMBL" id="CP001019">
    <property type="protein sequence ID" value="ACJ17888.1"/>
    <property type="molecule type" value="Genomic_DNA"/>
</dbReference>
<dbReference type="RefSeq" id="WP_005772080.1">
    <property type="nucleotide sequence ID" value="NC_011527.1"/>
</dbReference>
<dbReference type="SMR" id="B6IYW0"/>
<dbReference type="KEGG" id="cbg:CbuG_0462"/>
<dbReference type="HOGENOM" id="CLU_013386_1_0_6"/>
<dbReference type="UniPathway" id="UPA00664"/>
<dbReference type="GO" id="GO:0005886">
    <property type="term" value="C:plasma membrane"/>
    <property type="evidence" value="ECO:0007669"/>
    <property type="project" value="UniProtKB-SubCell"/>
</dbReference>
<dbReference type="GO" id="GO:0008961">
    <property type="term" value="F:phosphatidylglycerol-prolipoprotein diacylglyceryl transferase activity"/>
    <property type="evidence" value="ECO:0007669"/>
    <property type="project" value="UniProtKB-UniRule"/>
</dbReference>
<dbReference type="GO" id="GO:0042158">
    <property type="term" value="P:lipoprotein biosynthetic process"/>
    <property type="evidence" value="ECO:0007669"/>
    <property type="project" value="UniProtKB-UniRule"/>
</dbReference>
<dbReference type="HAMAP" id="MF_01147">
    <property type="entry name" value="Lgt"/>
    <property type="match status" value="1"/>
</dbReference>
<dbReference type="InterPro" id="IPR001640">
    <property type="entry name" value="Lgt"/>
</dbReference>
<dbReference type="NCBIfam" id="TIGR00544">
    <property type="entry name" value="lgt"/>
    <property type="match status" value="1"/>
</dbReference>
<dbReference type="PANTHER" id="PTHR30589:SF0">
    <property type="entry name" value="PHOSPHATIDYLGLYCEROL--PROLIPOPROTEIN DIACYLGLYCERYL TRANSFERASE"/>
    <property type="match status" value="1"/>
</dbReference>
<dbReference type="PANTHER" id="PTHR30589">
    <property type="entry name" value="PROLIPOPROTEIN DIACYLGLYCERYL TRANSFERASE"/>
    <property type="match status" value="1"/>
</dbReference>
<dbReference type="Pfam" id="PF01790">
    <property type="entry name" value="LGT"/>
    <property type="match status" value="1"/>
</dbReference>
<dbReference type="PROSITE" id="PS01311">
    <property type="entry name" value="LGT"/>
    <property type="match status" value="1"/>
</dbReference>
<organism>
    <name type="scientific">Coxiella burnetii (strain CbuG_Q212)</name>
    <name type="common">Coxiella burnetii (strain Q212)</name>
    <dbReference type="NCBI Taxonomy" id="434923"/>
    <lineage>
        <taxon>Bacteria</taxon>
        <taxon>Pseudomonadati</taxon>
        <taxon>Pseudomonadota</taxon>
        <taxon>Gammaproteobacteria</taxon>
        <taxon>Legionellales</taxon>
        <taxon>Coxiellaceae</taxon>
        <taxon>Coxiella</taxon>
    </lineage>
</organism>
<keyword id="KW-0997">Cell inner membrane</keyword>
<keyword id="KW-1003">Cell membrane</keyword>
<keyword id="KW-0472">Membrane</keyword>
<keyword id="KW-0808">Transferase</keyword>
<keyword id="KW-0812">Transmembrane</keyword>
<keyword id="KW-1133">Transmembrane helix</keyword>
<protein>
    <recommendedName>
        <fullName evidence="1">Phosphatidylglycerol--prolipoprotein diacylglyceryl transferase</fullName>
        <ecNumber evidence="1">2.5.1.145</ecNumber>
    </recommendedName>
</protein>
<gene>
    <name evidence="1" type="primary">lgt</name>
    <name type="ordered locus">CbuG_0462</name>
</gene>
<name>LGT_COXB2</name>
<comment type="function">
    <text evidence="1">Catalyzes the transfer of the diacylglyceryl group from phosphatidylglycerol to the sulfhydryl group of the N-terminal cysteine of a prolipoprotein, the first step in the formation of mature lipoproteins.</text>
</comment>
<comment type="catalytic activity">
    <reaction evidence="1">
        <text>L-cysteinyl-[prolipoprotein] + a 1,2-diacyl-sn-glycero-3-phospho-(1'-sn-glycerol) = an S-1,2-diacyl-sn-glyceryl-L-cysteinyl-[prolipoprotein] + sn-glycerol 1-phosphate + H(+)</text>
        <dbReference type="Rhea" id="RHEA:56712"/>
        <dbReference type="Rhea" id="RHEA-COMP:14679"/>
        <dbReference type="Rhea" id="RHEA-COMP:14680"/>
        <dbReference type="ChEBI" id="CHEBI:15378"/>
        <dbReference type="ChEBI" id="CHEBI:29950"/>
        <dbReference type="ChEBI" id="CHEBI:57685"/>
        <dbReference type="ChEBI" id="CHEBI:64716"/>
        <dbReference type="ChEBI" id="CHEBI:140658"/>
        <dbReference type="EC" id="2.5.1.145"/>
    </reaction>
</comment>
<comment type="pathway">
    <text evidence="1">Protein modification; lipoprotein biosynthesis (diacylglyceryl transfer).</text>
</comment>
<comment type="subcellular location">
    <subcellularLocation>
        <location evidence="1">Cell inner membrane</location>
        <topology evidence="1">Multi-pass membrane protein</topology>
    </subcellularLocation>
</comment>
<comment type="similarity">
    <text evidence="1">Belongs to the Lgt family.</text>
</comment>